<comment type="function">
    <text evidence="1">Repressor involved in the biosynthesis of the osmoprotectant glycine betaine. It represses transcription of the choline transporter BetT and the genes of BetAB involved in the synthesis of glycine betaine (By similarity).</text>
</comment>
<comment type="pathway">
    <text>Amine and polyamine biosynthesis; betaine biosynthesis via choline pathway [regulation].</text>
</comment>
<accession>A8GBX7</accession>
<organism>
    <name type="scientific">Serratia proteamaculans (strain 568)</name>
    <dbReference type="NCBI Taxonomy" id="399741"/>
    <lineage>
        <taxon>Bacteria</taxon>
        <taxon>Pseudomonadati</taxon>
        <taxon>Pseudomonadota</taxon>
        <taxon>Gammaproteobacteria</taxon>
        <taxon>Enterobacterales</taxon>
        <taxon>Yersiniaceae</taxon>
        <taxon>Serratia</taxon>
    </lineage>
</organism>
<proteinExistence type="inferred from homology"/>
<sequence length="198" mass="21739">MPKVGMQPIRRQQLIDATLAAVNEVGMHDATIAQIARRAGVSNGIISHYFKDKNGLLEATMRYLISHLGEAVKLRLQALSDHSPASRLQAIVAGNFDDSQINSAAMKTWLAFWASSLHQPQLNRLQQVNGRRLYSNLCAEFSRVLPQAEARLAAKGLAALIDGLWLRSALRGAAFNQAQAIALTTDYITFQLRGHTPP</sequence>
<gene>
    <name evidence="2" type="primary">betI</name>
    <name type="ordered locus">Spro_1513</name>
</gene>
<evidence type="ECO:0000250" key="1"/>
<evidence type="ECO:0000255" key="2">
    <source>
        <dbReference type="HAMAP-Rule" id="MF_00768"/>
    </source>
</evidence>
<dbReference type="EMBL" id="CP000826">
    <property type="protein sequence ID" value="ABV40617.1"/>
    <property type="molecule type" value="Genomic_DNA"/>
</dbReference>
<dbReference type="SMR" id="A8GBX7"/>
<dbReference type="STRING" id="399741.Spro_1513"/>
<dbReference type="KEGG" id="spe:Spro_1513"/>
<dbReference type="eggNOG" id="COG1309">
    <property type="taxonomic scope" value="Bacteria"/>
</dbReference>
<dbReference type="HOGENOM" id="CLU_069356_15_4_6"/>
<dbReference type="OrthoDB" id="7618612at2"/>
<dbReference type="UniPathway" id="UPA00529"/>
<dbReference type="GO" id="GO:0003700">
    <property type="term" value="F:DNA-binding transcription factor activity"/>
    <property type="evidence" value="ECO:0007669"/>
    <property type="project" value="UniProtKB-UniRule"/>
</dbReference>
<dbReference type="GO" id="GO:0000976">
    <property type="term" value="F:transcription cis-regulatory region binding"/>
    <property type="evidence" value="ECO:0007669"/>
    <property type="project" value="TreeGrafter"/>
</dbReference>
<dbReference type="GO" id="GO:0019285">
    <property type="term" value="P:glycine betaine biosynthetic process from choline"/>
    <property type="evidence" value="ECO:0007669"/>
    <property type="project" value="UniProtKB-UniRule"/>
</dbReference>
<dbReference type="GO" id="GO:0045892">
    <property type="term" value="P:negative regulation of DNA-templated transcription"/>
    <property type="evidence" value="ECO:0007669"/>
    <property type="project" value="UniProtKB-UniRule"/>
</dbReference>
<dbReference type="Gene3D" id="1.10.357.10">
    <property type="entry name" value="Tetracycline Repressor, domain 2"/>
    <property type="match status" value="1"/>
</dbReference>
<dbReference type="HAMAP" id="MF_00768">
    <property type="entry name" value="HTH_type_BetI"/>
    <property type="match status" value="1"/>
</dbReference>
<dbReference type="InterPro" id="IPR039538">
    <property type="entry name" value="BetI_C"/>
</dbReference>
<dbReference type="InterPro" id="IPR023772">
    <property type="entry name" value="DNA-bd_HTH_TetR-type_CS"/>
</dbReference>
<dbReference type="InterPro" id="IPR009057">
    <property type="entry name" value="Homeodomain-like_sf"/>
</dbReference>
<dbReference type="InterPro" id="IPR050109">
    <property type="entry name" value="HTH-type_TetR-like_transc_reg"/>
</dbReference>
<dbReference type="InterPro" id="IPR001647">
    <property type="entry name" value="HTH_TetR"/>
</dbReference>
<dbReference type="InterPro" id="IPR036271">
    <property type="entry name" value="Tet_transcr_reg_TetR-rel_C_sf"/>
</dbReference>
<dbReference type="InterPro" id="IPR017757">
    <property type="entry name" value="Tscrpt_rep_BetI"/>
</dbReference>
<dbReference type="NCBIfam" id="TIGR03384">
    <property type="entry name" value="betaine_BetI"/>
    <property type="match status" value="1"/>
</dbReference>
<dbReference type="NCBIfam" id="NF001978">
    <property type="entry name" value="PRK00767.1"/>
    <property type="match status" value="1"/>
</dbReference>
<dbReference type="PANTHER" id="PTHR30055:SF234">
    <property type="entry name" value="HTH-TYPE TRANSCRIPTIONAL REGULATOR BETI"/>
    <property type="match status" value="1"/>
</dbReference>
<dbReference type="PANTHER" id="PTHR30055">
    <property type="entry name" value="HTH-TYPE TRANSCRIPTIONAL REGULATOR RUTR"/>
    <property type="match status" value="1"/>
</dbReference>
<dbReference type="Pfam" id="PF13977">
    <property type="entry name" value="TetR_C_6"/>
    <property type="match status" value="1"/>
</dbReference>
<dbReference type="Pfam" id="PF00440">
    <property type="entry name" value="TetR_N"/>
    <property type="match status" value="1"/>
</dbReference>
<dbReference type="PRINTS" id="PR00455">
    <property type="entry name" value="HTHTETR"/>
</dbReference>
<dbReference type="SUPFAM" id="SSF46689">
    <property type="entry name" value="Homeodomain-like"/>
    <property type="match status" value="1"/>
</dbReference>
<dbReference type="SUPFAM" id="SSF48498">
    <property type="entry name" value="Tetracyclin repressor-like, C-terminal domain"/>
    <property type="match status" value="1"/>
</dbReference>
<dbReference type="PROSITE" id="PS01081">
    <property type="entry name" value="HTH_TETR_1"/>
    <property type="match status" value="1"/>
</dbReference>
<dbReference type="PROSITE" id="PS50977">
    <property type="entry name" value="HTH_TETR_2"/>
    <property type="match status" value="1"/>
</dbReference>
<name>BETI_SERP5</name>
<protein>
    <recommendedName>
        <fullName evidence="2">HTH-type transcriptional regulator BetI</fullName>
    </recommendedName>
</protein>
<reference key="1">
    <citation type="submission" date="2007-09" db="EMBL/GenBank/DDBJ databases">
        <title>Complete sequence of chromosome of Serratia proteamaculans 568.</title>
        <authorList>
            <consortium name="US DOE Joint Genome Institute"/>
            <person name="Copeland A."/>
            <person name="Lucas S."/>
            <person name="Lapidus A."/>
            <person name="Barry K."/>
            <person name="Glavina del Rio T."/>
            <person name="Dalin E."/>
            <person name="Tice H."/>
            <person name="Pitluck S."/>
            <person name="Chain P."/>
            <person name="Malfatti S."/>
            <person name="Shin M."/>
            <person name="Vergez L."/>
            <person name="Schmutz J."/>
            <person name="Larimer F."/>
            <person name="Land M."/>
            <person name="Hauser L."/>
            <person name="Kyrpides N."/>
            <person name="Kim E."/>
            <person name="Taghavi S."/>
            <person name="Newman L."/>
            <person name="Vangronsveld J."/>
            <person name="van der Lelie D."/>
            <person name="Richardson P."/>
        </authorList>
    </citation>
    <scope>NUCLEOTIDE SEQUENCE [LARGE SCALE GENOMIC DNA]</scope>
    <source>
        <strain>568</strain>
    </source>
</reference>
<keyword id="KW-0238">DNA-binding</keyword>
<keyword id="KW-0678">Repressor</keyword>
<keyword id="KW-0804">Transcription</keyword>
<keyword id="KW-0805">Transcription regulation</keyword>
<feature type="chain" id="PRO_1000083568" description="HTH-type transcriptional regulator BetI">
    <location>
        <begin position="1"/>
        <end position="198"/>
    </location>
</feature>
<feature type="domain" description="HTH tetR-type" evidence="2">
    <location>
        <begin position="8"/>
        <end position="68"/>
    </location>
</feature>
<feature type="DNA-binding region" description="H-T-H motif" evidence="2">
    <location>
        <begin position="31"/>
        <end position="50"/>
    </location>
</feature>